<dbReference type="EC" id="6.1.1.9" evidence="1"/>
<dbReference type="EMBL" id="CP000082">
    <property type="protein sequence ID" value="AAZ19698.1"/>
    <property type="molecule type" value="Genomic_DNA"/>
</dbReference>
<dbReference type="RefSeq" id="WP_011281108.1">
    <property type="nucleotide sequence ID" value="NC_007204.1"/>
</dbReference>
<dbReference type="SMR" id="Q4FQL0"/>
<dbReference type="STRING" id="259536.Psyc_1850"/>
<dbReference type="KEGG" id="par:Psyc_1850"/>
<dbReference type="eggNOG" id="COG0525">
    <property type="taxonomic scope" value="Bacteria"/>
</dbReference>
<dbReference type="HOGENOM" id="CLU_001493_0_2_6"/>
<dbReference type="OrthoDB" id="9810365at2"/>
<dbReference type="Proteomes" id="UP000000546">
    <property type="component" value="Chromosome"/>
</dbReference>
<dbReference type="GO" id="GO:0005829">
    <property type="term" value="C:cytosol"/>
    <property type="evidence" value="ECO:0007669"/>
    <property type="project" value="TreeGrafter"/>
</dbReference>
<dbReference type="GO" id="GO:0002161">
    <property type="term" value="F:aminoacyl-tRNA deacylase activity"/>
    <property type="evidence" value="ECO:0007669"/>
    <property type="project" value="InterPro"/>
</dbReference>
<dbReference type="GO" id="GO:0005524">
    <property type="term" value="F:ATP binding"/>
    <property type="evidence" value="ECO:0007669"/>
    <property type="project" value="UniProtKB-UniRule"/>
</dbReference>
<dbReference type="GO" id="GO:0004832">
    <property type="term" value="F:valine-tRNA ligase activity"/>
    <property type="evidence" value="ECO:0007669"/>
    <property type="project" value="UniProtKB-UniRule"/>
</dbReference>
<dbReference type="GO" id="GO:0006438">
    <property type="term" value="P:valyl-tRNA aminoacylation"/>
    <property type="evidence" value="ECO:0007669"/>
    <property type="project" value="UniProtKB-UniRule"/>
</dbReference>
<dbReference type="CDD" id="cd07962">
    <property type="entry name" value="Anticodon_Ia_Val"/>
    <property type="match status" value="1"/>
</dbReference>
<dbReference type="CDD" id="cd00817">
    <property type="entry name" value="ValRS_core"/>
    <property type="match status" value="1"/>
</dbReference>
<dbReference type="FunFam" id="1.10.287.380:FF:000001">
    <property type="entry name" value="Valine--tRNA ligase"/>
    <property type="match status" value="1"/>
</dbReference>
<dbReference type="FunFam" id="3.40.50.620:FF:000073">
    <property type="entry name" value="Valine--tRNA ligase"/>
    <property type="match status" value="1"/>
</dbReference>
<dbReference type="FunFam" id="3.90.740.10:FF:000003">
    <property type="entry name" value="Valine--tRNA ligase"/>
    <property type="match status" value="1"/>
</dbReference>
<dbReference type="FunFam" id="1.10.730.10:FF:000009">
    <property type="entry name" value="Valine--tRNA ligase, mitochondrial"/>
    <property type="match status" value="1"/>
</dbReference>
<dbReference type="FunFam" id="3.40.50.620:FF:000020">
    <property type="entry name" value="Valine--tRNA ligase, mitochondrial"/>
    <property type="match status" value="1"/>
</dbReference>
<dbReference type="Gene3D" id="3.40.50.620">
    <property type="entry name" value="HUPs"/>
    <property type="match status" value="2"/>
</dbReference>
<dbReference type="Gene3D" id="1.10.730.10">
    <property type="entry name" value="Isoleucyl-tRNA Synthetase, Domain 1"/>
    <property type="match status" value="1"/>
</dbReference>
<dbReference type="Gene3D" id="1.10.287.380">
    <property type="entry name" value="Valyl-tRNA synthetase, C-terminal domain"/>
    <property type="match status" value="1"/>
</dbReference>
<dbReference type="Gene3D" id="3.90.740.10">
    <property type="entry name" value="Valyl/Leucyl/Isoleucyl-tRNA synthetase, editing domain"/>
    <property type="match status" value="1"/>
</dbReference>
<dbReference type="HAMAP" id="MF_02004">
    <property type="entry name" value="Val_tRNA_synth_type1"/>
    <property type="match status" value="1"/>
</dbReference>
<dbReference type="InterPro" id="IPR001412">
    <property type="entry name" value="aa-tRNA-synth_I_CS"/>
</dbReference>
<dbReference type="InterPro" id="IPR002300">
    <property type="entry name" value="aa-tRNA-synth_Ia"/>
</dbReference>
<dbReference type="InterPro" id="IPR033705">
    <property type="entry name" value="Anticodon_Ia_Val"/>
</dbReference>
<dbReference type="InterPro" id="IPR013155">
    <property type="entry name" value="M/V/L/I-tRNA-synth_anticd-bd"/>
</dbReference>
<dbReference type="InterPro" id="IPR014729">
    <property type="entry name" value="Rossmann-like_a/b/a_fold"/>
</dbReference>
<dbReference type="InterPro" id="IPR010978">
    <property type="entry name" value="tRNA-bd_arm"/>
</dbReference>
<dbReference type="InterPro" id="IPR009080">
    <property type="entry name" value="tRNAsynth_Ia_anticodon-bd"/>
</dbReference>
<dbReference type="InterPro" id="IPR037118">
    <property type="entry name" value="Val-tRNA_synth_C_sf"/>
</dbReference>
<dbReference type="InterPro" id="IPR019499">
    <property type="entry name" value="Val-tRNA_synth_tRNA-bd"/>
</dbReference>
<dbReference type="InterPro" id="IPR009008">
    <property type="entry name" value="Val/Leu/Ile-tRNA-synth_edit"/>
</dbReference>
<dbReference type="InterPro" id="IPR002303">
    <property type="entry name" value="Valyl-tRNA_ligase"/>
</dbReference>
<dbReference type="NCBIfam" id="NF004349">
    <property type="entry name" value="PRK05729.1"/>
    <property type="match status" value="1"/>
</dbReference>
<dbReference type="NCBIfam" id="TIGR00422">
    <property type="entry name" value="valS"/>
    <property type="match status" value="1"/>
</dbReference>
<dbReference type="PANTHER" id="PTHR11946:SF93">
    <property type="entry name" value="VALINE--TRNA LIGASE, CHLOROPLASTIC_MITOCHONDRIAL 2"/>
    <property type="match status" value="1"/>
</dbReference>
<dbReference type="PANTHER" id="PTHR11946">
    <property type="entry name" value="VALYL-TRNA SYNTHETASES"/>
    <property type="match status" value="1"/>
</dbReference>
<dbReference type="Pfam" id="PF08264">
    <property type="entry name" value="Anticodon_1"/>
    <property type="match status" value="1"/>
</dbReference>
<dbReference type="Pfam" id="PF00133">
    <property type="entry name" value="tRNA-synt_1"/>
    <property type="match status" value="1"/>
</dbReference>
<dbReference type="Pfam" id="PF10458">
    <property type="entry name" value="Val_tRNA-synt_C"/>
    <property type="match status" value="1"/>
</dbReference>
<dbReference type="PRINTS" id="PR00986">
    <property type="entry name" value="TRNASYNTHVAL"/>
</dbReference>
<dbReference type="SUPFAM" id="SSF47323">
    <property type="entry name" value="Anticodon-binding domain of a subclass of class I aminoacyl-tRNA synthetases"/>
    <property type="match status" value="1"/>
</dbReference>
<dbReference type="SUPFAM" id="SSF52374">
    <property type="entry name" value="Nucleotidylyl transferase"/>
    <property type="match status" value="1"/>
</dbReference>
<dbReference type="SUPFAM" id="SSF46589">
    <property type="entry name" value="tRNA-binding arm"/>
    <property type="match status" value="1"/>
</dbReference>
<dbReference type="SUPFAM" id="SSF50677">
    <property type="entry name" value="ValRS/IleRS/LeuRS editing domain"/>
    <property type="match status" value="1"/>
</dbReference>
<dbReference type="PROSITE" id="PS00178">
    <property type="entry name" value="AA_TRNA_LIGASE_I"/>
    <property type="match status" value="1"/>
</dbReference>
<protein>
    <recommendedName>
        <fullName evidence="1">Valine--tRNA ligase</fullName>
        <ecNumber evidence="1">6.1.1.9</ecNumber>
    </recommendedName>
    <alternativeName>
        <fullName evidence="1">Valyl-tRNA synthetase</fullName>
        <shortName evidence="1">ValRS</shortName>
    </alternativeName>
</protein>
<feature type="chain" id="PRO_0000224541" description="Valine--tRNA ligase">
    <location>
        <begin position="1"/>
        <end position="984"/>
    </location>
</feature>
<feature type="coiled-coil region" evidence="1">
    <location>
        <begin position="954"/>
        <end position="984"/>
    </location>
</feature>
<feature type="short sequence motif" description="'HIGH' region">
    <location>
        <begin position="65"/>
        <end position="75"/>
    </location>
</feature>
<feature type="short sequence motif" description="'KMSKS' region">
    <location>
        <begin position="579"/>
        <end position="583"/>
    </location>
</feature>
<feature type="binding site" evidence="1">
    <location>
        <position position="582"/>
    </location>
    <ligand>
        <name>ATP</name>
        <dbReference type="ChEBI" id="CHEBI:30616"/>
    </ligand>
</feature>
<proteinExistence type="inferred from homology"/>
<name>SYV_PSYA2</name>
<reference key="1">
    <citation type="journal article" date="2010" name="Appl. Environ. Microbiol.">
        <title>The genome sequence of Psychrobacter arcticus 273-4, a psychroactive Siberian permafrost bacterium, reveals mechanisms for adaptation to low-temperature growth.</title>
        <authorList>
            <person name="Ayala-del-Rio H.L."/>
            <person name="Chain P.S."/>
            <person name="Grzymski J.J."/>
            <person name="Ponder M.A."/>
            <person name="Ivanova N."/>
            <person name="Bergholz P.W."/>
            <person name="Di Bartolo G."/>
            <person name="Hauser L."/>
            <person name="Land M."/>
            <person name="Bakermans C."/>
            <person name="Rodrigues D."/>
            <person name="Klappenbach J."/>
            <person name="Zarka D."/>
            <person name="Larimer F."/>
            <person name="Richardson P."/>
            <person name="Murray A."/>
            <person name="Thomashow M."/>
            <person name="Tiedje J.M."/>
        </authorList>
    </citation>
    <scope>NUCLEOTIDE SEQUENCE [LARGE SCALE GENOMIC DNA]</scope>
    <source>
        <strain>DSM 17307 / VKM B-2377 / 273-4</strain>
    </source>
</reference>
<accession>Q4FQL0</accession>
<gene>
    <name evidence="1" type="primary">valS</name>
    <name type="ordered locus">Psyc_1850</name>
</gene>
<evidence type="ECO:0000255" key="1">
    <source>
        <dbReference type="HAMAP-Rule" id="MF_02004"/>
    </source>
</evidence>
<keyword id="KW-0030">Aminoacyl-tRNA synthetase</keyword>
<keyword id="KW-0067">ATP-binding</keyword>
<keyword id="KW-0175">Coiled coil</keyword>
<keyword id="KW-0963">Cytoplasm</keyword>
<keyword id="KW-0436">Ligase</keyword>
<keyword id="KW-0547">Nucleotide-binding</keyword>
<keyword id="KW-0648">Protein biosynthesis</keyword>
<keyword id="KW-1185">Reference proteome</keyword>
<comment type="function">
    <text evidence="1">Catalyzes the attachment of valine to tRNA(Val). As ValRS can inadvertently accommodate and process structurally similar amino acids such as threonine, to avoid such errors, it has a 'posttransfer' editing activity that hydrolyzes mischarged Thr-tRNA(Val) in a tRNA-dependent manner.</text>
</comment>
<comment type="catalytic activity">
    <reaction evidence="1">
        <text>tRNA(Val) + L-valine + ATP = L-valyl-tRNA(Val) + AMP + diphosphate</text>
        <dbReference type="Rhea" id="RHEA:10704"/>
        <dbReference type="Rhea" id="RHEA-COMP:9672"/>
        <dbReference type="Rhea" id="RHEA-COMP:9708"/>
        <dbReference type="ChEBI" id="CHEBI:30616"/>
        <dbReference type="ChEBI" id="CHEBI:33019"/>
        <dbReference type="ChEBI" id="CHEBI:57762"/>
        <dbReference type="ChEBI" id="CHEBI:78442"/>
        <dbReference type="ChEBI" id="CHEBI:78537"/>
        <dbReference type="ChEBI" id="CHEBI:456215"/>
        <dbReference type="EC" id="6.1.1.9"/>
    </reaction>
</comment>
<comment type="subunit">
    <text evidence="1">Monomer.</text>
</comment>
<comment type="subcellular location">
    <subcellularLocation>
        <location evidence="1">Cytoplasm</location>
    </subcellularLocation>
</comment>
<comment type="domain">
    <text evidence="1">ValRS has two distinct active sites: one for aminoacylation and one for editing. The misactivated threonine is translocated from the active site to the editing site.</text>
</comment>
<comment type="domain">
    <text evidence="1">The C-terminal coiled-coil domain is crucial for aminoacylation activity.</text>
</comment>
<comment type="similarity">
    <text evidence="1">Belongs to the class-I aminoacyl-tRNA synthetase family. ValS type 1 subfamily.</text>
</comment>
<sequence>MSNPNNIESSKTNLTTSIQAALSQLENAYNPSEVEAGMYQGWEDSGYFQPTFDKDESFSIALPPPNVTGSLHMGHGFNNAIMDALTRYHRMDGDNTLWQPGTDHAGIATQMVVERRLEAEGIKRRDMSREDFIDKVWEWKEESGGNITRQIRRLGSSVDWSRERFTMDDGLSNAVKEVFVRLFDDGLIYRGKRLVNWDPKFQTALSDLEVENVDEKGSLWHFRYHFTDTDITTQDGKNYLVVATTRPETSLGDTAVAVNPKDERYAHLIGKTITLPITGRIVPIVADDYVDIEFGTGCVKITPAHDFNDYELGRRHELPLINILDAHAHILPAMEVYPDLQTREPTLETTPADYAGLERFAARKLLVEQAGEQGWLEKIEDYALKAPRAERGGAIVEPWLTDQWYVAVKELAQPAIAAVEDGQIEFVPAQYKNMYMAWMNGIQDWCISRQLWWGHRIPAWYDEEGSIYVARDEAEVRSKYNLAADVKLRQDDDVLDTWFSSGLWTFSTLDWADVNADPRVMETFHPTSVLVTGFDIIFFWVARMIMMTMHFVKNEDGTPQIPFKTVYVHGLVRDGNGQKMSKSKGNVLDPIDIIDGIELEALVEKRTSNMMNPKDAAKIEKQTRKEFPEGIPAFGTDALRFTFTSLASTGRDINFDLKRVEGYRNFCNKIWNASRFVLMNCVDKEGNAQAIDQTANADVWELPEKWIMSRLNSTITNIHQHFDQYRLDMVSHDIYEFIWNEYCDWYVELAKASLNDDSVSDERKAQIRYVLLHVLETALRFSHPIMPYLTEQIWQTIAPLLNRKETDSIVIAAYPQTDNSQISEQTEADMAWLQELIASVRNIRGEMKLGNAVRLPVLLQNISAAEDTRLSRIANQFKALAKVESLTILKEGDEVPLSSSSMVGQLRVLVPMKGLIDPTAELARLGKSYDKLKGQSEGIARKLGNEGFVSKAPVEVVDAEKAKLAELEGQLTAMTAQMEELKNL</sequence>
<organism>
    <name type="scientific">Psychrobacter arcticus (strain DSM 17307 / VKM B-2377 / 273-4)</name>
    <dbReference type="NCBI Taxonomy" id="259536"/>
    <lineage>
        <taxon>Bacteria</taxon>
        <taxon>Pseudomonadati</taxon>
        <taxon>Pseudomonadota</taxon>
        <taxon>Gammaproteobacteria</taxon>
        <taxon>Moraxellales</taxon>
        <taxon>Moraxellaceae</taxon>
        <taxon>Psychrobacter</taxon>
    </lineage>
</organism>